<reference key="1">
    <citation type="journal article" date="1996" name="Science">
        <title>Complete genome sequence of the methanogenic archaeon, Methanococcus jannaschii.</title>
        <authorList>
            <person name="Bult C.J."/>
            <person name="White O."/>
            <person name="Olsen G.J."/>
            <person name="Zhou L."/>
            <person name="Fleischmann R.D."/>
            <person name="Sutton G.G."/>
            <person name="Blake J.A."/>
            <person name="FitzGerald L.M."/>
            <person name="Clayton R.A."/>
            <person name="Gocayne J.D."/>
            <person name="Kerlavage A.R."/>
            <person name="Dougherty B.A."/>
            <person name="Tomb J.-F."/>
            <person name="Adams M.D."/>
            <person name="Reich C.I."/>
            <person name="Overbeek R."/>
            <person name="Kirkness E.F."/>
            <person name="Weinstock K.G."/>
            <person name="Merrick J.M."/>
            <person name="Glodek A."/>
            <person name="Scott J.L."/>
            <person name="Geoghagen N.S.M."/>
            <person name="Weidman J.F."/>
            <person name="Fuhrmann J.L."/>
            <person name="Nguyen D."/>
            <person name="Utterback T.R."/>
            <person name="Kelley J.M."/>
            <person name="Peterson J.D."/>
            <person name="Sadow P.W."/>
            <person name="Hanna M.C."/>
            <person name="Cotton M.D."/>
            <person name="Roberts K.M."/>
            <person name="Hurst M.A."/>
            <person name="Kaine B.P."/>
            <person name="Borodovsky M."/>
            <person name="Klenk H.-P."/>
            <person name="Fraser C.M."/>
            <person name="Smith H.O."/>
            <person name="Woese C.R."/>
            <person name="Venter J.C."/>
        </authorList>
    </citation>
    <scope>NUCLEOTIDE SEQUENCE [LARGE SCALE GENOMIC DNA]</scope>
    <source>
        <strain>ATCC 43067 / DSM 2661 / JAL-1 / JCM 10045 / NBRC 100440</strain>
    </source>
</reference>
<reference key="2">
    <citation type="journal article" date="1997" name="J. Mol. Biol.">
        <title>Selenoprotein synthesis in archaea: identification of an mRNA element of Methanococcus jannaschii probably directing selenocysteine insertion.</title>
        <authorList>
            <person name="Wilting R."/>
            <person name="Schorling S."/>
            <person name="Persson B.C."/>
            <person name="Boeck A."/>
        </authorList>
    </citation>
    <scope>PROBABLE SELENOCYSTEINE AT SEC-121</scope>
</reference>
<proteinExistence type="inferred from homology"/>
<accession>P61154</accession>
<name>FWDB_METJA</name>
<comment type="function">
    <text evidence="2">Catalyzes the reversible oxidation of CO(2) and methanofuran (MFR) to N-formylmethanofuran (CHO-MFR). This enzyme is oxygen-labile.</text>
</comment>
<comment type="catalytic activity">
    <reaction evidence="2">
        <text>N-formylmethanofuran + 2 oxidized [2Fe-2S]-[ferredoxin] + H2O = methanofuran + 2 reduced [2Fe-2S]-[ferredoxin] + CO2 + H(+)</text>
        <dbReference type="Rhea" id="RHEA:19841"/>
        <dbReference type="Rhea" id="RHEA-COMP:10000"/>
        <dbReference type="Rhea" id="RHEA-COMP:10001"/>
        <dbReference type="ChEBI" id="CHEBI:15377"/>
        <dbReference type="ChEBI" id="CHEBI:15378"/>
        <dbReference type="ChEBI" id="CHEBI:16526"/>
        <dbReference type="ChEBI" id="CHEBI:33737"/>
        <dbReference type="ChEBI" id="CHEBI:33738"/>
        <dbReference type="ChEBI" id="CHEBI:57727"/>
        <dbReference type="ChEBI" id="CHEBI:58151"/>
        <dbReference type="EC" id="1.2.7.12"/>
    </reaction>
</comment>
<comment type="cofactor">
    <cofactor evidence="3">
        <name>W-bis(molybdopterin guanine dinucleotide)</name>
        <dbReference type="ChEBI" id="CHEBI:60537"/>
    </cofactor>
</comment>
<comment type="pathway">
    <text>One-carbon metabolism; methanogenesis from CO(2); 5,10-methenyl-5,6,7,8-tetrahydromethanopterin from CO(2): step 1/3.</text>
</comment>
<comment type="subunit">
    <text evidence="1">This enzyme is composed of six subunits FwdA, FwdC, FwdD, FwdE, FwdF and FwdG.</text>
</comment>
<comment type="similarity">
    <text evidence="3">Belongs to the FwdB family.</text>
</comment>
<organism>
    <name type="scientific">Methanocaldococcus jannaschii (strain ATCC 43067 / DSM 2661 / JAL-1 / JCM 10045 / NBRC 100440)</name>
    <name type="common">Methanococcus jannaschii</name>
    <dbReference type="NCBI Taxonomy" id="243232"/>
    <lineage>
        <taxon>Archaea</taxon>
        <taxon>Methanobacteriati</taxon>
        <taxon>Methanobacteriota</taxon>
        <taxon>Methanomada group</taxon>
        <taxon>Methanococci</taxon>
        <taxon>Methanococcales</taxon>
        <taxon>Methanocaldococcaceae</taxon>
        <taxon>Methanocaldococcus</taxon>
    </lineage>
</organism>
<protein>
    <recommendedName>
        <fullName>Tungsten-containing formylmethanofuran dehydrogenase 2 subunit B</fullName>
        <ecNumber evidence="2">1.2.7.12</ecNumber>
    </recommendedName>
    <alternativeName>
        <fullName>Tungsten-containing formylmethanofuran dehydrogenase II subunit B</fullName>
    </alternativeName>
</protein>
<dbReference type="EC" id="1.2.7.12" evidence="2"/>
<dbReference type="EMBL" id="L77117">
    <property type="status" value="NOT_ANNOTATED_CDS"/>
    <property type="molecule type" value="Genomic_DNA"/>
</dbReference>
<dbReference type="RefSeq" id="WP_083774548.1">
    <property type="nucleotide sequence ID" value="NC_000909.1"/>
</dbReference>
<dbReference type="FunCoup" id="P61154">
    <property type="interactions" value="7"/>
</dbReference>
<dbReference type="GeneID" id="1452598"/>
<dbReference type="InParanoid" id="P61154"/>
<dbReference type="OrthoDB" id="23466at2157"/>
<dbReference type="PhylomeDB" id="P61154"/>
<dbReference type="UniPathway" id="UPA00640">
    <property type="reaction ID" value="UER00692"/>
</dbReference>
<dbReference type="Proteomes" id="UP000000805">
    <property type="component" value="Chromosome"/>
</dbReference>
<dbReference type="GO" id="GO:0018493">
    <property type="term" value="F:formylmethanofuran dehydrogenase activity"/>
    <property type="evidence" value="ECO:0007669"/>
    <property type="project" value="UniProtKB-EC"/>
</dbReference>
<dbReference type="GO" id="GO:0019386">
    <property type="term" value="P:methanogenesis, from carbon dioxide"/>
    <property type="evidence" value="ECO:0007669"/>
    <property type="project" value="UniProtKB-UniPathway"/>
</dbReference>
<dbReference type="CDD" id="cd02761">
    <property type="entry name" value="MopB_FmdB-FwdB"/>
    <property type="match status" value="1"/>
</dbReference>
<dbReference type="Gene3D" id="3.40.50.740">
    <property type="match status" value="2"/>
</dbReference>
<dbReference type="Gene3D" id="3.40.228.10">
    <property type="entry name" value="Dimethylsulfoxide Reductase, domain 2"/>
    <property type="match status" value="2"/>
</dbReference>
<dbReference type="InterPro" id="IPR016457">
    <property type="entry name" value="Formylmethanofuran_DH_bsu"/>
</dbReference>
<dbReference type="InterPro" id="IPR006656">
    <property type="entry name" value="Mopterin_OxRdtase"/>
</dbReference>
<dbReference type="InterPro" id="IPR050123">
    <property type="entry name" value="Prok_molybdopt-oxidoreductase"/>
</dbReference>
<dbReference type="NCBIfam" id="TIGR03129">
    <property type="entry name" value="one_C_dehyd_B"/>
    <property type="match status" value="1"/>
</dbReference>
<dbReference type="PANTHER" id="PTHR43105:SF14">
    <property type="entry name" value="FORMATE DEHYDROGENASE H"/>
    <property type="match status" value="1"/>
</dbReference>
<dbReference type="PANTHER" id="PTHR43105">
    <property type="entry name" value="RESPIRATORY NITRATE REDUCTASE"/>
    <property type="match status" value="1"/>
</dbReference>
<dbReference type="Pfam" id="PF00384">
    <property type="entry name" value="Molybdopterin"/>
    <property type="match status" value="1"/>
</dbReference>
<dbReference type="PIRSF" id="PIRSF005646">
    <property type="entry name" value="FwdB"/>
    <property type="match status" value="1"/>
</dbReference>
<dbReference type="SUPFAM" id="SSF53706">
    <property type="entry name" value="Formate dehydrogenase/DMSO reductase, domains 1-3"/>
    <property type="match status" value="1"/>
</dbReference>
<keyword id="KW-0484">Methanogenesis</keyword>
<keyword id="KW-0560">Oxidoreductase</keyword>
<keyword id="KW-1185">Reference proteome</keyword>
<keyword id="KW-0712">Selenocysteine</keyword>
<keyword id="KW-0826">Tungsten</keyword>
<gene>
    <name type="primary">fwdB</name>
    <name type="ordered locus">MJ1194</name>
</gene>
<feature type="chain" id="PRO_0000087392" description="Tungsten-containing formylmethanofuran dehydrogenase 2 subunit B">
    <location>
        <begin position="1"/>
        <end position="435"/>
    </location>
</feature>
<feature type="non-standard amino acid" description="Selenocysteine" evidence="3">
    <location>
        <position position="121"/>
    </location>
</feature>
<evidence type="ECO:0000250" key="1"/>
<evidence type="ECO:0000250" key="2">
    <source>
        <dbReference type="UniProtKB" id="Q48943"/>
    </source>
</evidence>
<evidence type="ECO:0000305" key="3"/>
<sequence>MVKVVRNVVCPFCGTLCDDLEILVEDNHIVGTRHACRIGNAKFMHFEGAVRYTEPLMRENKKDDFKKVDYETAIEETARLLTEATLPLIYGWSATECHAHMYGVELAELVGAVIDNTASVUHGPSLLAVQDVGYPVCTLGEVKNRADVIIFWGSNPMHAHPRHMSRYSVFARGFFRERGREDRTLIVVDPRETDTAKLADIHLQVEPHKDYELVSAMRAVLKGFELQVDKVAGVPADLIYEAVEVCKNAQFGELFFAMGVTMTRGKHRNIDNAIQLVIDLNAYTKFGLMPMRGHYNVNGFNQVLTWVTGYPFGVDFSRGYPRYNPGETTANDLLQRGETDMMLNIASDPGAHFPQKAVQHMAKIPLVCIDPHETPTTQLANIIIPPAIAGVEVEGTAYRMDGVPIQLRKVIDPPEGVLPDREILKILIKKVKEML</sequence>